<keyword id="KW-0998">Cell outer membrane</keyword>
<keyword id="KW-0903">Direct protein sequencing</keyword>
<keyword id="KW-0406">Ion transport</keyword>
<keyword id="KW-0472">Membrane</keyword>
<keyword id="KW-0626">Porin</keyword>
<keyword id="KW-0732">Signal</keyword>
<keyword id="KW-0812">Transmembrane</keyword>
<keyword id="KW-1134">Transmembrane beta strand</keyword>
<keyword id="KW-0813">Transport</keyword>
<reference key="1">
    <citation type="submission" date="2004-06" db="EMBL/GenBank/DDBJ databases">
        <title>Cloning and expression of the porin gene from Halomonas sp. strain 40.</title>
        <authorList>
            <person name="Tokunaga H."/>
            <person name="Furukawa M."/>
            <person name="Tokunaga M."/>
        </authorList>
    </citation>
    <scope>NUCLEOTIDE SEQUENCE [GENOMIC DNA]</scope>
    <source>
        <strain>40</strain>
    </source>
</reference>
<reference key="2">
    <citation type="submission" date="2005-12" db="EMBL/GenBank/DDBJ databases">
        <title>Cloning and expression of the porin gene from moderately halophilic bacteria.</title>
        <authorList>
            <person name="Tokunaga H."/>
            <person name="Furukawa M."/>
            <person name="Tokunaga M."/>
        </authorList>
    </citation>
    <scope>NUCLEOTIDE SEQUENCE [GENOMIC DNA]</scope>
    <source>
        <strain>40</strain>
    </source>
</reference>
<reference key="3">
    <citation type="journal article" date="2004" name="J. Basic Microbiol.">
        <title>Major outer membrane proteins in moderately halophilic eubacteria of genera Chromohalobacter and Halomonas.</title>
        <authorList>
            <person name="Tokunaga H."/>
            <person name="Mitsuo K."/>
            <person name="Kamekura M."/>
            <person name="Tokunaga M."/>
        </authorList>
    </citation>
    <scope>PROTEIN SEQUENCE OF 22-36</scope>
    <scope>SUBCELLULAR LOCATION</scope>
    <source>
        <strain>40</strain>
    </source>
</reference>
<reference key="4">
    <citation type="journal article" date="2013" name="Int. J. Biol. Macromol.">
        <title>Channel forming outer membrane porin protein in halophile: expressed as a soluble form in Escherichia coli.</title>
        <authorList>
            <person name="Tokunaga H."/>
            <person name="Furukawa M."/>
            <person name="Arakawa T."/>
            <person name="Tokunaga M."/>
        </authorList>
    </citation>
    <scope>PROTEIN SEQUENCE OF 22-36</scope>
    <scope>FUNCTION</scope>
    <scope>SUBUNIT</scope>
    <scope>SUBCELLULAR LOCATION</scope>
    <source>
        <strain>40</strain>
    </source>
</reference>
<gene>
    <name evidence="6 7" type="primary">hopP</name>
</gene>
<proteinExistence type="evidence at protein level"/>
<dbReference type="EMBL" id="AB244100">
    <property type="protein sequence ID" value="BAF96703.1"/>
    <property type="molecule type" value="Genomic_DNA"/>
</dbReference>
<dbReference type="EMBL" id="AB183012">
    <property type="protein sequence ID" value="BAI63216.1"/>
    <property type="molecule type" value="Genomic_DNA"/>
</dbReference>
<dbReference type="SMR" id="A9ZM27"/>
<dbReference type="GO" id="GO:0009279">
    <property type="term" value="C:cell outer membrane"/>
    <property type="evidence" value="ECO:0007669"/>
    <property type="project" value="UniProtKB-SubCell"/>
</dbReference>
<dbReference type="GO" id="GO:0046930">
    <property type="term" value="C:pore complex"/>
    <property type="evidence" value="ECO:0007669"/>
    <property type="project" value="UniProtKB-KW"/>
</dbReference>
<dbReference type="GO" id="GO:0015288">
    <property type="term" value="F:porin activity"/>
    <property type="evidence" value="ECO:0007669"/>
    <property type="project" value="UniProtKB-KW"/>
</dbReference>
<dbReference type="GO" id="GO:0034220">
    <property type="term" value="P:monoatomic ion transmembrane transport"/>
    <property type="evidence" value="ECO:0007669"/>
    <property type="project" value="InterPro"/>
</dbReference>
<dbReference type="CDD" id="cd00342">
    <property type="entry name" value="gram_neg_porins"/>
    <property type="match status" value="1"/>
</dbReference>
<dbReference type="Gene3D" id="2.40.160.10">
    <property type="entry name" value="Porin"/>
    <property type="match status" value="1"/>
</dbReference>
<dbReference type="InterPro" id="IPR050298">
    <property type="entry name" value="Gram-neg_bact_OMP"/>
</dbReference>
<dbReference type="InterPro" id="IPR033900">
    <property type="entry name" value="Gram_neg_porin_domain"/>
</dbReference>
<dbReference type="InterPro" id="IPR023614">
    <property type="entry name" value="Porin_dom_sf"/>
</dbReference>
<dbReference type="InterPro" id="IPR001702">
    <property type="entry name" value="Porin_Gram-ve"/>
</dbReference>
<dbReference type="PANTHER" id="PTHR34501:SF9">
    <property type="entry name" value="MAJOR OUTER MEMBRANE PROTEIN P.IA"/>
    <property type="match status" value="1"/>
</dbReference>
<dbReference type="PANTHER" id="PTHR34501">
    <property type="entry name" value="PROTEIN YDDL-RELATED"/>
    <property type="match status" value="1"/>
</dbReference>
<dbReference type="Pfam" id="PF13609">
    <property type="entry name" value="Porin_4"/>
    <property type="match status" value="1"/>
</dbReference>
<dbReference type="PRINTS" id="PR00182">
    <property type="entry name" value="ECOLNEIPORIN"/>
</dbReference>
<dbReference type="SUPFAM" id="SSF56935">
    <property type="entry name" value="Porins"/>
    <property type="match status" value="1"/>
</dbReference>
<protein>
    <recommendedName>
        <fullName evidence="5">Monosaccharide porin</fullName>
    </recommendedName>
    <alternativeName>
        <fullName evidence="3">Major outer membrane protein HopP</fullName>
    </alternativeName>
</protein>
<comment type="function">
    <text evidence="2">Outer membrane porin that allows diffusion of monosaccharides. Also allows diffusion of disaccharides and trisaccharides, with reduced diffusion rate.</text>
</comment>
<comment type="subunit">
    <text evidence="4">Homotrimer.</text>
</comment>
<comment type="subcellular location">
    <subcellularLocation>
        <location evidence="1 2">Cell outer membrane</location>
        <topology evidence="2">Multi-pass membrane protein</topology>
    </subcellularLocation>
</comment>
<comment type="similarity">
    <text evidence="5">Belongs to the Gram-negative porin family.</text>
</comment>
<feature type="signal peptide" evidence="1 2">
    <location>
        <begin position="1"/>
        <end position="21"/>
    </location>
</feature>
<feature type="chain" id="PRO_0000431311" description="Monosaccharide porin">
    <location>
        <begin position="22"/>
        <end position="366"/>
    </location>
</feature>
<organism>
    <name type="scientific">Halomonas sp</name>
    <dbReference type="NCBI Taxonomy" id="1486246"/>
    <lineage>
        <taxon>Bacteria</taxon>
        <taxon>Pseudomonadati</taxon>
        <taxon>Pseudomonadota</taxon>
        <taxon>Gammaproteobacteria</taxon>
        <taxon>Oceanospirillales</taxon>
        <taxon>Halomonadaceae</taxon>
        <taxon>Halomonas</taxon>
    </lineage>
</organism>
<sequence length="366" mass="39571">MKKTLLATAIAGAMAASGAQAATVYNQDGTKLDIYGNVQIGFRNIEAENDNGNIETQNDVFDNGSTIGFAAEHVIYDGLTGYMKIEFDDFKADEMKTAGRDAGDTAYVGLKGNFGDVKLGSYDTLMDDWIQDPITNNEYFDVSDTSGSGSSVVAVGGEVETDQLTYVSPSFNGLELAIGTQYKGDMEEENVTSRGNASVFGGAKYTAGNFSVAATYDNLDNYEVTQTGVDNKQEFGDRYGVTGQYQWNSLRVALKYERFDSDLDNVDSVNFYGLGARYGYGYGDIYGAYQYVDVGGDTFGNVVDDATSGDSPSDTASDRGDDTYNEFIIGGTYNISDAMYTWVEAAFYDREDDEGDGVAAGVTYMF</sequence>
<accession>A9ZM27</accession>
<name>HOPP_HALSX</name>
<evidence type="ECO:0000269" key="1">
    <source>
    </source>
</evidence>
<evidence type="ECO:0000269" key="2">
    <source>
    </source>
</evidence>
<evidence type="ECO:0000303" key="3">
    <source>
    </source>
</evidence>
<evidence type="ECO:0000303" key="4">
    <source>
    </source>
</evidence>
<evidence type="ECO:0000305" key="5"/>
<evidence type="ECO:0000312" key="6">
    <source>
        <dbReference type="EMBL" id="BAF96703.1"/>
    </source>
</evidence>
<evidence type="ECO:0000312" key="7">
    <source>
        <dbReference type="EMBL" id="BAI63216.1"/>
    </source>
</evidence>